<gene>
    <name evidence="6" type="primary">LBO1</name>
    <name evidence="9" type="ordered locus">At3g21420</name>
    <name evidence="10" type="ORF">MHC9.10</name>
</gene>
<proteinExistence type="evidence at protein level"/>
<evidence type="ECO:0000250" key="1">
    <source>
        <dbReference type="UniProtKB" id="A0A0B6CGH9"/>
    </source>
</evidence>
<evidence type="ECO:0000250" key="2">
    <source>
        <dbReference type="UniProtKB" id="Q94LP4"/>
    </source>
</evidence>
<evidence type="ECO:0000255" key="3">
    <source>
        <dbReference type="PROSITE-ProRule" id="PRU00805"/>
    </source>
</evidence>
<evidence type="ECO:0000269" key="4">
    <source>
    </source>
</evidence>
<evidence type="ECO:0000269" key="5">
    <source>
    </source>
</evidence>
<evidence type="ECO:0000303" key="6">
    <source>
    </source>
</evidence>
<evidence type="ECO:0000305" key="7"/>
<evidence type="ECO:0000305" key="8">
    <source>
    </source>
</evidence>
<evidence type="ECO:0000312" key="9">
    <source>
        <dbReference type="Araport" id="AT3G21420"/>
    </source>
</evidence>
<evidence type="ECO:0000312" key="10">
    <source>
        <dbReference type="EMBL" id="BAB03055.1"/>
    </source>
</evidence>
<protein>
    <recommendedName>
        <fullName evidence="6">Protein LATERAL BRANCHING OXIDOREDUCTASE 1</fullName>
        <ecNumber evidence="3 4 5">1.14.11.-</ecNumber>
    </recommendedName>
</protein>
<comment type="function">
    <text evidence="4 5">Oxoglutarate-dependent dioxygenase involved in the biosynthesis of strigolactone natural products, bioactive compounds promoting plant fitness and soil microbe interactions, but preventing shoot branching (PubMed:27194725, PubMed:32399509). Catalyzes the hydroxylation of (11R)-methyl carlactonoate (MeCLA) to produce (11R)-hydroxymethyl carlactonoate (1'-HO-MeCLA) in final stages of strigolactone biosynthesis, downstream of MAX1 and CLAMT (PubMed:27194725, PubMed:32399509).</text>
</comment>
<comment type="catalytic activity">
    <reaction evidence="4 5">
        <text>(11R)-methyl carlactonoate + 2-oxoglutarate + O2 = (11R)-hydroxymethyl carlactonoate + succinate + CO2</text>
        <dbReference type="Rhea" id="RHEA:76107"/>
        <dbReference type="ChEBI" id="CHEBI:15379"/>
        <dbReference type="ChEBI" id="CHEBI:16526"/>
        <dbReference type="ChEBI" id="CHEBI:16810"/>
        <dbReference type="ChEBI" id="CHEBI:30031"/>
        <dbReference type="ChEBI" id="CHEBI:194506"/>
        <dbReference type="ChEBI" id="CHEBI:194512"/>
    </reaction>
    <physiologicalReaction direction="left-to-right" evidence="4 5">
        <dbReference type="Rhea" id="RHEA:76108"/>
    </physiologicalReaction>
</comment>
<comment type="cofactor">
    <cofactor evidence="3">
        <name>Fe(2+)</name>
        <dbReference type="ChEBI" id="CHEBI:29033"/>
    </cofactor>
    <text evidence="3">Binds 1 Fe(2+) ion per subunit.</text>
</comment>
<comment type="cofactor">
    <cofactor evidence="2">
        <name>L-ascorbate</name>
        <dbReference type="ChEBI" id="CHEBI:38290"/>
    </cofactor>
</comment>
<comment type="subunit">
    <text evidence="1">Monomer.</text>
</comment>
<comment type="subcellular location">
    <subcellularLocation>
        <location evidence="2">Cytoplasm</location>
    </subcellularLocation>
</comment>
<comment type="tissue specificity">
    <text evidence="4">Expressed in the vasculature throughout the plant and in the buds and root tips.</text>
</comment>
<comment type="disruption phenotype">
    <text evidence="4 5">Increased shoot branching associated with an accumulation of carlactone (CL) and methyl carlactonoate (MeCLA) as well as reduced responses to these compounds, substrate and product of MAX1, respectively (PubMed:27194725). Accumulation of carlactone (CL), carlactonoate (CLA) and methyl carlactonoate (MeCLA), 16-hydroxycarlactone (16-HO-CL), hydroxycarlactonoates 3-HO-CLA, 4-HO-CLA and 16-HO-CLA, as well as methyl 4-hydroxycarlactonoate (4-HO-MeCLA) and methyl 16-hydroxycarlactonoate (16-HO-MeCLA), compounds related to (11R)-hydroxymethyl carlactonoate (1'-HO-MeCLA) (PubMed:32399509). The phenotype of lbo max4 double-mutant plants is similar to the single mutant max4 (PubMed:27194725).</text>
</comment>
<comment type="miscellaneous">
    <text evidence="8">The branching phenotypes of the lbo mutant can be rescued by exogenous treatment with the synthetic strigolactone analog GR24. However, the lbo and lbo max4 mutants do not respond to carlactone (CL) (Probable).</text>
</comment>
<comment type="similarity">
    <text evidence="7">Belongs to the iron/ascorbate-dependent oxidoreductase family.</text>
</comment>
<name>LBO1_ARATH</name>
<reference key="1">
    <citation type="journal article" date="2000" name="DNA Res.">
        <title>Structural analysis of Arabidopsis thaliana chromosome 3. II. Sequence features of the 4,251,695 bp regions covered by 90 P1, TAC and BAC clones.</title>
        <authorList>
            <person name="Kaneko T."/>
            <person name="Katoh T."/>
            <person name="Sato S."/>
            <person name="Nakamura Y."/>
            <person name="Asamizu E."/>
            <person name="Tabata S."/>
        </authorList>
    </citation>
    <scope>NUCLEOTIDE SEQUENCE [LARGE SCALE GENOMIC DNA]</scope>
    <source>
        <strain>cv. Columbia</strain>
    </source>
</reference>
<reference key="2">
    <citation type="journal article" date="2017" name="Plant J.">
        <title>Araport11: a complete reannotation of the Arabidopsis thaliana reference genome.</title>
        <authorList>
            <person name="Cheng C.Y."/>
            <person name="Krishnakumar V."/>
            <person name="Chan A.P."/>
            <person name="Thibaud-Nissen F."/>
            <person name="Schobel S."/>
            <person name="Town C.D."/>
        </authorList>
    </citation>
    <scope>GENOME REANNOTATION</scope>
    <source>
        <strain>cv. Columbia</strain>
    </source>
</reference>
<reference key="3">
    <citation type="journal article" date="2003" name="Science">
        <title>Empirical analysis of transcriptional activity in the Arabidopsis genome.</title>
        <authorList>
            <person name="Yamada K."/>
            <person name="Lim J."/>
            <person name="Dale J.M."/>
            <person name="Chen H."/>
            <person name="Shinn P."/>
            <person name="Palm C.J."/>
            <person name="Southwick A.M."/>
            <person name="Wu H.C."/>
            <person name="Kim C.J."/>
            <person name="Nguyen M."/>
            <person name="Pham P.K."/>
            <person name="Cheuk R.F."/>
            <person name="Karlin-Newmann G."/>
            <person name="Liu S.X."/>
            <person name="Lam B."/>
            <person name="Sakano H."/>
            <person name="Wu T."/>
            <person name="Yu G."/>
            <person name="Miranda M."/>
            <person name="Quach H.L."/>
            <person name="Tripp M."/>
            <person name="Chang C.H."/>
            <person name="Lee J.M."/>
            <person name="Toriumi M.J."/>
            <person name="Chan M.M."/>
            <person name="Tang C.C."/>
            <person name="Onodera C.S."/>
            <person name="Deng J.M."/>
            <person name="Akiyama K."/>
            <person name="Ansari Y."/>
            <person name="Arakawa T."/>
            <person name="Banh J."/>
            <person name="Banno F."/>
            <person name="Bowser L."/>
            <person name="Brooks S.Y."/>
            <person name="Carninci P."/>
            <person name="Chao Q."/>
            <person name="Choy N."/>
            <person name="Enju A."/>
            <person name="Goldsmith A.D."/>
            <person name="Gurjal M."/>
            <person name="Hansen N.F."/>
            <person name="Hayashizaki Y."/>
            <person name="Johnson-Hopson C."/>
            <person name="Hsuan V.W."/>
            <person name="Iida K."/>
            <person name="Karnes M."/>
            <person name="Khan S."/>
            <person name="Koesema E."/>
            <person name="Ishida J."/>
            <person name="Jiang P.X."/>
            <person name="Jones T."/>
            <person name="Kawai J."/>
            <person name="Kamiya A."/>
            <person name="Meyers C."/>
            <person name="Nakajima M."/>
            <person name="Narusaka M."/>
            <person name="Seki M."/>
            <person name="Sakurai T."/>
            <person name="Satou M."/>
            <person name="Tamse R."/>
            <person name="Vaysberg M."/>
            <person name="Wallender E.K."/>
            <person name="Wong C."/>
            <person name="Yamamura Y."/>
            <person name="Yuan S."/>
            <person name="Shinozaki K."/>
            <person name="Davis R.W."/>
            <person name="Theologis A."/>
            <person name="Ecker J.R."/>
        </authorList>
    </citation>
    <scope>NUCLEOTIDE SEQUENCE [LARGE SCALE MRNA]</scope>
    <source>
        <strain>cv. Columbia</strain>
    </source>
</reference>
<reference key="4">
    <citation type="submission" date="2006-07" db="EMBL/GenBank/DDBJ databases">
        <title>Large-scale analysis of RIKEN Arabidopsis full-length (RAFL) cDNAs.</title>
        <authorList>
            <person name="Totoki Y."/>
            <person name="Seki M."/>
            <person name="Ishida J."/>
            <person name="Nakajima M."/>
            <person name="Enju A."/>
            <person name="Kamiya A."/>
            <person name="Narusaka M."/>
            <person name="Shin-i T."/>
            <person name="Nakagawa M."/>
            <person name="Sakamoto N."/>
            <person name="Oishi K."/>
            <person name="Kohara Y."/>
            <person name="Kobayashi M."/>
            <person name="Toyoda A."/>
            <person name="Sakaki Y."/>
            <person name="Sakurai T."/>
            <person name="Iida K."/>
            <person name="Akiyama K."/>
            <person name="Satou M."/>
            <person name="Toyoda T."/>
            <person name="Konagaya A."/>
            <person name="Carninci P."/>
            <person name="Kawai J."/>
            <person name="Hayashizaki Y."/>
            <person name="Shinozaki K."/>
        </authorList>
    </citation>
    <scope>NUCLEOTIDE SEQUENCE [LARGE SCALE MRNA]</scope>
    <source>
        <strain>cv. Columbia</strain>
    </source>
</reference>
<reference key="5">
    <citation type="submission" date="2002-03" db="EMBL/GenBank/DDBJ databases">
        <title>Full-length cDNA from Arabidopsis thaliana.</title>
        <authorList>
            <person name="Brover V.V."/>
            <person name="Troukhan M.E."/>
            <person name="Alexandrov N.A."/>
            <person name="Lu Y.-P."/>
            <person name="Flavell R.B."/>
            <person name="Feldmann K.A."/>
        </authorList>
    </citation>
    <scope>NUCLEOTIDE SEQUENCE [LARGE SCALE MRNA]</scope>
</reference>
<reference key="6">
    <citation type="journal article" date="2016" name="Proc. Natl. Acad. Sci. U.S.A.">
        <title>LATERAL BRANCHING OXIDOREDUCTASE acts in the final stages of strigolactone biosynthesis in Arabidopsis.</title>
        <authorList>
            <person name="Brewer P.B."/>
            <person name="Yoneyama K."/>
            <person name="Filardo F."/>
            <person name="Meyers E."/>
            <person name="Scaffidi A."/>
            <person name="Frickey T."/>
            <person name="Akiyama K."/>
            <person name="Seto Y."/>
            <person name="Dun E.A."/>
            <person name="Cremer J.E."/>
            <person name="Kerr S.C."/>
            <person name="Waters M.T."/>
            <person name="Flematti G.R."/>
            <person name="Mason M.G."/>
            <person name="Weiller G."/>
            <person name="Yamaguchi S."/>
            <person name="Nomura T."/>
            <person name="Smith S.M."/>
            <person name="Yoneyama K."/>
            <person name="Beveridge C.A."/>
        </authorList>
    </citation>
    <scope>FUNCTION</scope>
    <scope>DISRUPTION PHENOTYPE</scope>
    <scope>MUTAGENESIS OF LEU-63 AND GLY-253</scope>
    <scope>CATALYTIC ACTIVITY</scope>
    <scope>TISSUE SPECIFICITY</scope>
    <source>
        <strain>cv. Columbia</strain>
        <strain>cv. Landsberg erecta</strain>
        <strain>cv. Wassilewskija-4</strain>
    </source>
</reference>
<reference key="7">
    <citation type="journal article" date="2020" name="Plant Direct">
        <title>Hydroxyl carlactone derivatives are predominant strigolactones in Arabidopsis.</title>
        <authorList>
            <person name="Yoneyama K."/>
            <person name="Akiyama K."/>
            <person name="Brewer P.B."/>
            <person name="Mori N."/>
            <person name="Kawano-Kawada M."/>
            <person name="Haruta S."/>
            <person name="Nishiwaki H."/>
            <person name="Yamauchi S."/>
            <person name="Xie X."/>
            <person name="Umehara M."/>
            <person name="Beveridge C.A."/>
            <person name="Yoneyama K."/>
            <person name="Nomura T."/>
        </authorList>
    </citation>
    <scope>FUNCTION</scope>
    <scope>DISRUPTION PHENOTYPE</scope>
    <scope>MUTAGENESIS OF LEU-63 AND GLY-253</scope>
    <scope>CATALYTIC ACTIVITY</scope>
    <source>
        <strain>cv. Columbia</strain>
    </source>
</reference>
<dbReference type="EC" id="1.14.11.-" evidence="3 4 5"/>
<dbReference type="EMBL" id="AP001305">
    <property type="protein sequence ID" value="BAB03055.1"/>
    <property type="molecule type" value="Genomic_DNA"/>
</dbReference>
<dbReference type="EMBL" id="CP002686">
    <property type="protein sequence ID" value="AEE76507.1"/>
    <property type="molecule type" value="Genomic_DNA"/>
</dbReference>
<dbReference type="EMBL" id="BT005988">
    <property type="protein sequence ID" value="AAO64923.1"/>
    <property type="molecule type" value="mRNA"/>
</dbReference>
<dbReference type="EMBL" id="AK227427">
    <property type="protein sequence ID" value="BAE99431.1"/>
    <property type="molecule type" value="mRNA"/>
</dbReference>
<dbReference type="EMBL" id="AY084795">
    <property type="protein sequence ID" value="AAM61362.1"/>
    <property type="molecule type" value="mRNA"/>
</dbReference>
<dbReference type="RefSeq" id="NP_566685.1">
    <property type="nucleotide sequence ID" value="NM_113037.5"/>
</dbReference>
<dbReference type="SMR" id="Q9LIF4"/>
<dbReference type="FunCoup" id="Q9LIF4">
    <property type="interactions" value="12"/>
</dbReference>
<dbReference type="STRING" id="3702.Q9LIF4"/>
<dbReference type="PaxDb" id="3702-AT3G21420.1"/>
<dbReference type="ProteomicsDB" id="175702"/>
<dbReference type="EnsemblPlants" id="AT3G21420.1">
    <property type="protein sequence ID" value="AT3G21420.1"/>
    <property type="gene ID" value="AT3G21420"/>
</dbReference>
<dbReference type="GeneID" id="821696"/>
<dbReference type="Gramene" id="AT3G21420.1">
    <property type="protein sequence ID" value="AT3G21420.1"/>
    <property type="gene ID" value="AT3G21420"/>
</dbReference>
<dbReference type="KEGG" id="ath:AT3G21420"/>
<dbReference type="Araport" id="AT3G21420"/>
<dbReference type="TAIR" id="AT3G21420">
    <property type="gene designation" value="LBO1"/>
</dbReference>
<dbReference type="eggNOG" id="KOG0143">
    <property type="taxonomic scope" value="Eukaryota"/>
</dbReference>
<dbReference type="HOGENOM" id="CLU_010119_16_0_1"/>
<dbReference type="OMA" id="NNTWNRG"/>
<dbReference type="OrthoDB" id="288590at2759"/>
<dbReference type="BioCyc" id="ARA:AT3G21420-MONOMER"/>
<dbReference type="PRO" id="PR:Q9LIF4"/>
<dbReference type="Proteomes" id="UP000006548">
    <property type="component" value="Chromosome 3"/>
</dbReference>
<dbReference type="ExpressionAtlas" id="Q9LIF4">
    <property type="expression patterns" value="baseline and differential"/>
</dbReference>
<dbReference type="GO" id="GO:0005737">
    <property type="term" value="C:cytoplasm"/>
    <property type="evidence" value="ECO:0007669"/>
    <property type="project" value="UniProtKB-SubCell"/>
</dbReference>
<dbReference type="GO" id="GO:0051213">
    <property type="term" value="F:dioxygenase activity"/>
    <property type="evidence" value="ECO:0007669"/>
    <property type="project" value="UniProtKB-KW"/>
</dbReference>
<dbReference type="GO" id="GO:0046872">
    <property type="term" value="F:metal ion binding"/>
    <property type="evidence" value="ECO:0007669"/>
    <property type="project" value="UniProtKB-KW"/>
</dbReference>
<dbReference type="GO" id="GO:2000032">
    <property type="term" value="P:regulation of secondary shoot formation"/>
    <property type="evidence" value="ECO:0000315"/>
    <property type="project" value="UniProtKB"/>
</dbReference>
<dbReference type="GO" id="GO:1901601">
    <property type="term" value="P:strigolactone biosynthetic process"/>
    <property type="evidence" value="ECO:0000316"/>
    <property type="project" value="TAIR"/>
</dbReference>
<dbReference type="FunFam" id="2.60.120.330:FF:000001">
    <property type="entry name" value="Protein SRG1"/>
    <property type="match status" value="1"/>
</dbReference>
<dbReference type="Gene3D" id="2.60.120.330">
    <property type="entry name" value="B-lactam Antibiotic, Isopenicillin N Synthase, Chain"/>
    <property type="match status" value="1"/>
</dbReference>
<dbReference type="InterPro" id="IPR026992">
    <property type="entry name" value="DIOX_N"/>
</dbReference>
<dbReference type="InterPro" id="IPR044861">
    <property type="entry name" value="IPNS-like_FE2OG_OXY"/>
</dbReference>
<dbReference type="InterPro" id="IPR027443">
    <property type="entry name" value="IPNS-like_sf"/>
</dbReference>
<dbReference type="InterPro" id="IPR005123">
    <property type="entry name" value="Oxoglu/Fe-dep_dioxygenase_dom"/>
</dbReference>
<dbReference type="InterPro" id="IPR050295">
    <property type="entry name" value="Plant_2OG-oxidoreductases"/>
</dbReference>
<dbReference type="PANTHER" id="PTHR47991">
    <property type="entry name" value="OXOGLUTARATE/IRON-DEPENDENT DIOXYGENASE"/>
    <property type="match status" value="1"/>
</dbReference>
<dbReference type="Pfam" id="PF03171">
    <property type="entry name" value="2OG-FeII_Oxy"/>
    <property type="match status" value="1"/>
</dbReference>
<dbReference type="Pfam" id="PF14226">
    <property type="entry name" value="DIOX_N"/>
    <property type="match status" value="1"/>
</dbReference>
<dbReference type="SUPFAM" id="SSF51197">
    <property type="entry name" value="Clavaminate synthase-like"/>
    <property type="match status" value="1"/>
</dbReference>
<dbReference type="PROSITE" id="PS51471">
    <property type="entry name" value="FE2OG_OXY"/>
    <property type="match status" value="1"/>
</dbReference>
<sequence>MAPLPISSIRVGKIDDVQELIKSKPNKVPERFIREEYERGVVVSSLKTHHLHHQIPVIDLSKLSKPDNDDFFFEILKLSQACEDWGFFQVINHGIEVEVVEDIEEVASEFFDMPLEEKKKYPMEPGTVQGYGQAFIFSEDQKLDWCNMFALGVHPPQIRNPKLWPSKPARFSESLEGYSKEIRELCKRLLKYIAISLGLKEERFEEMFGEAVQAVRMNYYPPCSSPDLVLGLSPHSDGSALTVLQQSKNSCVGLQILKDNTWVPVKPLPNALVINIGDTIEVLSNGKYKSVEHRAVTNREKERLTIVTFYAPNYEVEIEPMSELVDDETNPCKYRSYNHGDYSYHYVSNKLQGKKSLDFAKILN</sequence>
<feature type="chain" id="PRO_0000459610" description="Protein LATERAL BRANCHING OXIDOREDUCTASE 1">
    <location>
        <begin position="1"/>
        <end position="364"/>
    </location>
</feature>
<feature type="domain" description="Fe2OG dioxygenase" evidence="3">
    <location>
        <begin position="203"/>
        <end position="312"/>
    </location>
</feature>
<feature type="binding site" evidence="3">
    <location>
        <position position="235"/>
    </location>
    <ligand>
        <name>Fe cation</name>
        <dbReference type="ChEBI" id="CHEBI:24875"/>
    </ligand>
</feature>
<feature type="binding site" evidence="3">
    <location>
        <position position="237"/>
    </location>
    <ligand>
        <name>Fe cation</name>
        <dbReference type="ChEBI" id="CHEBI:24875"/>
    </ligand>
</feature>
<feature type="binding site" evidence="3">
    <location>
        <position position="293"/>
    </location>
    <ligand>
        <name>Fe cation</name>
        <dbReference type="ChEBI" id="CHEBI:24875"/>
    </ligand>
</feature>
<feature type="binding site" evidence="3">
    <location>
        <position position="303"/>
    </location>
    <ligand>
        <name>2-oxoglutarate</name>
        <dbReference type="ChEBI" id="CHEBI:16810"/>
    </ligand>
</feature>
<feature type="mutagenesis site" description="In lbo-3; slightly increased shoot branching and almost normal activity." evidence="4 5">
    <original>L</original>
    <variation>F</variation>
    <location>
        <position position="63"/>
    </location>
</feature>
<feature type="mutagenesis site" description="In lbo-2; increased shoot branching associated with reduced activity toward (11R)-methyl carlactonoate and very low conversion to (11R)-hydroxymethyl carlactonoate." evidence="4 5">
    <original>G</original>
    <variation>D</variation>
    <location>
        <position position="253"/>
    </location>
</feature>
<organism>
    <name type="scientific">Arabidopsis thaliana</name>
    <name type="common">Mouse-ear cress</name>
    <dbReference type="NCBI Taxonomy" id="3702"/>
    <lineage>
        <taxon>Eukaryota</taxon>
        <taxon>Viridiplantae</taxon>
        <taxon>Streptophyta</taxon>
        <taxon>Embryophyta</taxon>
        <taxon>Tracheophyta</taxon>
        <taxon>Spermatophyta</taxon>
        <taxon>Magnoliopsida</taxon>
        <taxon>eudicotyledons</taxon>
        <taxon>Gunneridae</taxon>
        <taxon>Pentapetalae</taxon>
        <taxon>rosids</taxon>
        <taxon>malvids</taxon>
        <taxon>Brassicales</taxon>
        <taxon>Brassicaceae</taxon>
        <taxon>Camelineae</taxon>
        <taxon>Arabidopsis</taxon>
    </lineage>
</organism>
<accession>Q9LIF4</accession>
<keyword id="KW-0963">Cytoplasm</keyword>
<keyword id="KW-0223">Dioxygenase</keyword>
<keyword id="KW-0408">Iron</keyword>
<keyword id="KW-0479">Metal-binding</keyword>
<keyword id="KW-0560">Oxidoreductase</keyword>
<keyword id="KW-1185">Reference proteome</keyword>